<proteinExistence type="inferred from homology"/>
<feature type="chain" id="PRO_0000406795" description="Threonine--tRNA ligase">
    <location>
        <begin position="1"/>
        <end position="573"/>
    </location>
</feature>
<feature type="region of interest" description="Catalytic" evidence="1">
    <location>
        <begin position="174"/>
        <end position="474"/>
    </location>
</feature>
<feature type="binding site" evidence="1">
    <location>
        <position position="268"/>
    </location>
    <ligand>
        <name>Zn(2+)</name>
        <dbReference type="ChEBI" id="CHEBI:29105"/>
    </ligand>
</feature>
<feature type="binding site" evidence="1">
    <location>
        <position position="319"/>
    </location>
    <ligand>
        <name>Zn(2+)</name>
        <dbReference type="ChEBI" id="CHEBI:29105"/>
    </ligand>
</feature>
<feature type="binding site" evidence="1">
    <location>
        <position position="451"/>
    </location>
    <ligand>
        <name>Zn(2+)</name>
        <dbReference type="ChEBI" id="CHEBI:29105"/>
    </ligand>
</feature>
<accession>Q7NBT5</accession>
<organism>
    <name type="scientific">Mycoplasmoides gallisepticum (strain R(low / passage 15 / clone 2))</name>
    <name type="common">Mycoplasma gallisepticum</name>
    <dbReference type="NCBI Taxonomy" id="710127"/>
    <lineage>
        <taxon>Bacteria</taxon>
        <taxon>Bacillati</taxon>
        <taxon>Mycoplasmatota</taxon>
        <taxon>Mycoplasmoidales</taxon>
        <taxon>Mycoplasmoidaceae</taxon>
        <taxon>Mycoplasmoides</taxon>
    </lineage>
</organism>
<keyword id="KW-0030">Aminoacyl-tRNA synthetase</keyword>
<keyword id="KW-0067">ATP-binding</keyword>
<keyword id="KW-0963">Cytoplasm</keyword>
<keyword id="KW-0436">Ligase</keyword>
<keyword id="KW-0479">Metal-binding</keyword>
<keyword id="KW-0547">Nucleotide-binding</keyword>
<keyword id="KW-0648">Protein biosynthesis</keyword>
<keyword id="KW-1185">Reference proteome</keyword>
<keyword id="KW-0694">RNA-binding</keyword>
<keyword id="KW-0820">tRNA-binding</keyword>
<keyword id="KW-0862">Zinc</keyword>
<reference key="1">
    <citation type="journal article" date="2003" name="Microbiology">
        <title>The complete genome sequence of the avian pathogen Mycoplasma gallisepticum strain R(low).</title>
        <authorList>
            <person name="Papazisi L."/>
            <person name="Gorton T.S."/>
            <person name="Kutish G."/>
            <person name="Markham P.F."/>
            <person name="Browning G.F."/>
            <person name="Nguyen D.K."/>
            <person name="Swartzell S."/>
            <person name="Madan A."/>
            <person name="Mahairas G."/>
            <person name="Geary S.J."/>
        </authorList>
    </citation>
    <scope>NUCLEOTIDE SEQUENCE [LARGE SCALE GENOMIC DNA]</scope>
    <source>
        <strain>R(low / passage 15 / clone 2)</strain>
    </source>
</reference>
<comment type="function">
    <text evidence="1">Catalyzes the attachment of threonine to tRNA(Thr) in a two-step reaction: L-threonine is first activated by ATP to form Thr-AMP and then transferred to the acceptor end of tRNA(Thr). Also edits incorrectly charged L-seryl-tRNA(Thr).</text>
</comment>
<comment type="catalytic activity">
    <reaction evidence="1">
        <text>tRNA(Thr) + L-threonine + ATP = L-threonyl-tRNA(Thr) + AMP + diphosphate + H(+)</text>
        <dbReference type="Rhea" id="RHEA:24624"/>
        <dbReference type="Rhea" id="RHEA-COMP:9670"/>
        <dbReference type="Rhea" id="RHEA-COMP:9704"/>
        <dbReference type="ChEBI" id="CHEBI:15378"/>
        <dbReference type="ChEBI" id="CHEBI:30616"/>
        <dbReference type="ChEBI" id="CHEBI:33019"/>
        <dbReference type="ChEBI" id="CHEBI:57926"/>
        <dbReference type="ChEBI" id="CHEBI:78442"/>
        <dbReference type="ChEBI" id="CHEBI:78534"/>
        <dbReference type="ChEBI" id="CHEBI:456215"/>
        <dbReference type="EC" id="6.1.1.3"/>
    </reaction>
</comment>
<comment type="cofactor">
    <cofactor evidence="1">
        <name>Zn(2+)</name>
        <dbReference type="ChEBI" id="CHEBI:29105"/>
    </cofactor>
    <text evidence="1">Binds 1 zinc ion per subunit.</text>
</comment>
<comment type="subunit">
    <text evidence="1">Homodimer.</text>
</comment>
<comment type="subcellular location">
    <subcellularLocation>
        <location evidence="1">Cytoplasm</location>
    </subcellularLocation>
</comment>
<comment type="similarity">
    <text evidence="1">Belongs to the class-II aminoacyl-tRNA synthetase family.</text>
</comment>
<gene>
    <name evidence="1" type="primary">thrS</name>
    <name type="ordered locus">MYCGA1750</name>
    <name type="ORF">MGA_0925</name>
</gene>
<name>SYT_MYCGA</name>
<sequence length="573" mass="66014">MLNYFNTALLMVQMILKKQDPSIKFGQMSVNDQGFYLDYLSQTLNINPEDFNKLIKSLAKLCSSAQPISLKTVDLKIANQLLSDQPYLLELINEAKEKTVNLATVDNHHYYLPMAQLVDNTKLVKAFNFQSVGGAYFKGDKDNLVMVRLNGFGFENDKVMQDYLEIIEEQKQRDHRRINKILELFTFNQLAGPGMPIWLPNGQIVRQLIGDYVHSVQKKFGFMAVNTPILGNVDLYKKSGHYNHYAKDMFPELALLDGDKMMLRPMTCPHHCLVYLNKPRNYYDLPMRLSEDALLHRYEASGGLTGLERVRAMTLLDNHIFCRLDQIKTEILNAYQVIKEVIGTFNLKFHRIDLSLHDPNDKQSFIDNEQMWARSENQLEDALKDLGLEYTKQVGEAAFYGPKIDFQVKTALNKIITVSTIQLDFSLPSEEKFDIKYKTKDNTYEQGVIIHLGIIGTYERFVATLLEQTKGALDLWLAPKQAVIIPVNNSVHLEGCNQLLEKLLARDLRVTVDSRDERLNKKIRDHQVNKIPVQIIIGDNELKNPDLITYRLYGQEDSNQLELTKFIELFKKP</sequence>
<evidence type="ECO:0000255" key="1">
    <source>
        <dbReference type="HAMAP-Rule" id="MF_00184"/>
    </source>
</evidence>
<protein>
    <recommendedName>
        <fullName evidence="1">Threonine--tRNA ligase</fullName>
        <ecNumber evidence="1">6.1.1.3</ecNumber>
    </recommendedName>
    <alternativeName>
        <fullName evidence="1">Threonyl-tRNA synthetase</fullName>
        <shortName evidence="1">ThrRS</shortName>
    </alternativeName>
</protein>
<dbReference type="EC" id="6.1.1.3" evidence="1"/>
<dbReference type="EMBL" id="AE015450">
    <property type="protein sequence ID" value="AAP56525.1"/>
    <property type="molecule type" value="Genomic_DNA"/>
</dbReference>
<dbReference type="SMR" id="Q7NBT5"/>
<dbReference type="KEGG" id="mga:MGA_0925"/>
<dbReference type="HOGENOM" id="CLU_008554_3_2_14"/>
<dbReference type="OrthoDB" id="9802304at2"/>
<dbReference type="Proteomes" id="UP000001418">
    <property type="component" value="Chromosome"/>
</dbReference>
<dbReference type="GO" id="GO:0005737">
    <property type="term" value="C:cytoplasm"/>
    <property type="evidence" value="ECO:0007669"/>
    <property type="project" value="UniProtKB-SubCell"/>
</dbReference>
<dbReference type="GO" id="GO:0005524">
    <property type="term" value="F:ATP binding"/>
    <property type="evidence" value="ECO:0007669"/>
    <property type="project" value="UniProtKB-UniRule"/>
</dbReference>
<dbReference type="GO" id="GO:0046872">
    <property type="term" value="F:metal ion binding"/>
    <property type="evidence" value="ECO:0007669"/>
    <property type="project" value="UniProtKB-KW"/>
</dbReference>
<dbReference type="GO" id="GO:0004829">
    <property type="term" value="F:threonine-tRNA ligase activity"/>
    <property type="evidence" value="ECO:0007669"/>
    <property type="project" value="UniProtKB-UniRule"/>
</dbReference>
<dbReference type="GO" id="GO:0000049">
    <property type="term" value="F:tRNA binding"/>
    <property type="evidence" value="ECO:0007669"/>
    <property type="project" value="UniProtKB-KW"/>
</dbReference>
<dbReference type="GO" id="GO:0006435">
    <property type="term" value="P:threonyl-tRNA aminoacylation"/>
    <property type="evidence" value="ECO:0007669"/>
    <property type="project" value="UniProtKB-UniRule"/>
</dbReference>
<dbReference type="CDD" id="cd00860">
    <property type="entry name" value="ThrRS_anticodon"/>
    <property type="match status" value="1"/>
</dbReference>
<dbReference type="CDD" id="cd00771">
    <property type="entry name" value="ThrRS_core"/>
    <property type="match status" value="1"/>
</dbReference>
<dbReference type="FunFam" id="3.30.930.10:FF:000002">
    <property type="entry name" value="Threonine--tRNA ligase"/>
    <property type="match status" value="1"/>
</dbReference>
<dbReference type="Gene3D" id="3.40.50.800">
    <property type="entry name" value="Anticodon-binding domain"/>
    <property type="match status" value="1"/>
</dbReference>
<dbReference type="Gene3D" id="3.30.930.10">
    <property type="entry name" value="Bira Bifunctional Protein, Domain 2"/>
    <property type="match status" value="1"/>
</dbReference>
<dbReference type="Gene3D" id="3.30.980.10">
    <property type="entry name" value="Threonyl-trna Synthetase, Chain A, domain 2"/>
    <property type="match status" value="1"/>
</dbReference>
<dbReference type="HAMAP" id="MF_00184">
    <property type="entry name" value="Thr_tRNA_synth"/>
    <property type="match status" value="1"/>
</dbReference>
<dbReference type="InterPro" id="IPR002314">
    <property type="entry name" value="aa-tRNA-synt_IIb"/>
</dbReference>
<dbReference type="InterPro" id="IPR006195">
    <property type="entry name" value="aa-tRNA-synth_II"/>
</dbReference>
<dbReference type="InterPro" id="IPR045864">
    <property type="entry name" value="aa-tRNA-synth_II/BPL/LPL"/>
</dbReference>
<dbReference type="InterPro" id="IPR004154">
    <property type="entry name" value="Anticodon-bd"/>
</dbReference>
<dbReference type="InterPro" id="IPR036621">
    <property type="entry name" value="Anticodon-bd_dom_sf"/>
</dbReference>
<dbReference type="InterPro" id="IPR002320">
    <property type="entry name" value="Thr-tRNA-ligase_IIa"/>
</dbReference>
<dbReference type="InterPro" id="IPR018163">
    <property type="entry name" value="Thr/Ala-tRNA-synth_IIc_edit"/>
</dbReference>
<dbReference type="InterPro" id="IPR047246">
    <property type="entry name" value="ThrRS_anticodon"/>
</dbReference>
<dbReference type="InterPro" id="IPR033728">
    <property type="entry name" value="ThrRS_core"/>
</dbReference>
<dbReference type="NCBIfam" id="TIGR00418">
    <property type="entry name" value="thrS"/>
    <property type="match status" value="1"/>
</dbReference>
<dbReference type="PANTHER" id="PTHR11451:SF56">
    <property type="entry name" value="THREONINE--TRNA LIGASE 1"/>
    <property type="match status" value="1"/>
</dbReference>
<dbReference type="PANTHER" id="PTHR11451">
    <property type="entry name" value="THREONINE-TRNA LIGASE"/>
    <property type="match status" value="1"/>
</dbReference>
<dbReference type="Pfam" id="PF03129">
    <property type="entry name" value="HGTP_anticodon"/>
    <property type="match status" value="1"/>
</dbReference>
<dbReference type="Pfam" id="PF00587">
    <property type="entry name" value="tRNA-synt_2b"/>
    <property type="match status" value="1"/>
</dbReference>
<dbReference type="PRINTS" id="PR01047">
    <property type="entry name" value="TRNASYNTHTHR"/>
</dbReference>
<dbReference type="SUPFAM" id="SSF52954">
    <property type="entry name" value="Class II aaRS ABD-related"/>
    <property type="match status" value="1"/>
</dbReference>
<dbReference type="SUPFAM" id="SSF55681">
    <property type="entry name" value="Class II aaRS and biotin synthetases"/>
    <property type="match status" value="1"/>
</dbReference>
<dbReference type="SUPFAM" id="SSF55186">
    <property type="entry name" value="ThrRS/AlaRS common domain"/>
    <property type="match status" value="1"/>
</dbReference>
<dbReference type="PROSITE" id="PS50862">
    <property type="entry name" value="AA_TRNA_LIGASE_II"/>
    <property type="match status" value="1"/>
</dbReference>